<dbReference type="EC" id="5.1.1.3" evidence="1"/>
<dbReference type="EMBL" id="AF263927">
    <property type="protein sequence ID" value="AAF72713.1"/>
    <property type="molecule type" value="Genomic_DNA"/>
</dbReference>
<dbReference type="SMR" id="Q9L4V5"/>
<dbReference type="UniPathway" id="UPA00219"/>
<dbReference type="GO" id="GO:0008881">
    <property type="term" value="F:glutamate racemase activity"/>
    <property type="evidence" value="ECO:0007669"/>
    <property type="project" value="UniProtKB-UniRule"/>
</dbReference>
<dbReference type="GO" id="GO:0071555">
    <property type="term" value="P:cell wall organization"/>
    <property type="evidence" value="ECO:0007669"/>
    <property type="project" value="UniProtKB-KW"/>
</dbReference>
<dbReference type="GO" id="GO:0009252">
    <property type="term" value="P:peptidoglycan biosynthetic process"/>
    <property type="evidence" value="ECO:0007669"/>
    <property type="project" value="UniProtKB-UniRule"/>
</dbReference>
<dbReference type="GO" id="GO:0008360">
    <property type="term" value="P:regulation of cell shape"/>
    <property type="evidence" value="ECO:0007669"/>
    <property type="project" value="UniProtKB-KW"/>
</dbReference>
<dbReference type="FunFam" id="3.40.50.1860:FF:000002">
    <property type="entry name" value="Glutamate racemase"/>
    <property type="match status" value="1"/>
</dbReference>
<dbReference type="Gene3D" id="3.40.50.1860">
    <property type="match status" value="2"/>
</dbReference>
<dbReference type="HAMAP" id="MF_00258">
    <property type="entry name" value="Glu_racemase"/>
    <property type="match status" value="1"/>
</dbReference>
<dbReference type="InterPro" id="IPR015942">
    <property type="entry name" value="Asp/Glu/hydantoin_racemase"/>
</dbReference>
<dbReference type="InterPro" id="IPR001920">
    <property type="entry name" value="Asp/Glu_race"/>
</dbReference>
<dbReference type="InterPro" id="IPR018187">
    <property type="entry name" value="Asp/Glu_racemase_AS_1"/>
</dbReference>
<dbReference type="InterPro" id="IPR033134">
    <property type="entry name" value="Asp/Glu_racemase_AS_2"/>
</dbReference>
<dbReference type="InterPro" id="IPR004391">
    <property type="entry name" value="Glu_race"/>
</dbReference>
<dbReference type="NCBIfam" id="TIGR00067">
    <property type="entry name" value="glut_race"/>
    <property type="match status" value="1"/>
</dbReference>
<dbReference type="NCBIfam" id="NF002035">
    <property type="entry name" value="PRK00865.1-3"/>
    <property type="match status" value="1"/>
</dbReference>
<dbReference type="PANTHER" id="PTHR21198">
    <property type="entry name" value="GLUTAMATE RACEMASE"/>
    <property type="match status" value="1"/>
</dbReference>
<dbReference type="PANTHER" id="PTHR21198:SF2">
    <property type="entry name" value="GLUTAMATE RACEMASE"/>
    <property type="match status" value="1"/>
</dbReference>
<dbReference type="Pfam" id="PF01177">
    <property type="entry name" value="Asp_Glu_race"/>
    <property type="match status" value="1"/>
</dbReference>
<dbReference type="SUPFAM" id="SSF53681">
    <property type="entry name" value="Aspartate/glutamate racemase"/>
    <property type="match status" value="2"/>
</dbReference>
<dbReference type="PROSITE" id="PS00923">
    <property type="entry name" value="ASP_GLU_RACEMASE_1"/>
    <property type="match status" value="1"/>
</dbReference>
<dbReference type="PROSITE" id="PS00924">
    <property type="entry name" value="ASP_GLU_RACEMASE_2"/>
    <property type="match status" value="1"/>
</dbReference>
<accession>Q9L4V5</accession>
<evidence type="ECO:0000255" key="1">
    <source>
        <dbReference type="HAMAP-Rule" id="MF_00258"/>
    </source>
</evidence>
<keyword id="KW-0133">Cell shape</keyword>
<keyword id="KW-0961">Cell wall biogenesis/degradation</keyword>
<keyword id="KW-0413">Isomerase</keyword>
<keyword id="KW-0573">Peptidoglycan synthesis</keyword>
<reference key="1">
    <citation type="submission" date="2000-05" db="EMBL/GenBank/DDBJ databases">
        <title>Proteins from cold-adapted bacteria: evolutionary and structural relationships with mesophilic and thermophilic counterparts.</title>
        <authorList>
            <person name="Galkin A."/>
            <person name="Kulakova L."/>
            <person name="Kurihara T."/>
            <person name="Yoshimura T."/>
            <person name="Esaki N."/>
        </authorList>
    </citation>
    <scope>NUCLEOTIDE SEQUENCE [GENOMIC DNA]</scope>
</reference>
<comment type="function">
    <text evidence="1">Provides the (R)-glutamate required for cell wall biosynthesis.</text>
</comment>
<comment type="catalytic activity">
    <reaction evidence="1">
        <text>L-glutamate = D-glutamate</text>
        <dbReference type="Rhea" id="RHEA:12813"/>
        <dbReference type="ChEBI" id="CHEBI:29985"/>
        <dbReference type="ChEBI" id="CHEBI:29986"/>
        <dbReference type="EC" id="5.1.1.3"/>
    </reaction>
</comment>
<comment type="pathway">
    <text evidence="1">Cell wall biogenesis; peptidoglycan biosynthesis.</text>
</comment>
<comment type="similarity">
    <text evidence="1">Belongs to the aspartate/glutamate racemases family.</text>
</comment>
<feature type="chain" id="PRO_0000095463" description="Glutamate racemase">
    <location>
        <begin position="1"/>
        <end position="268"/>
    </location>
</feature>
<feature type="active site" description="Proton donor/acceptor" evidence="1">
    <location>
        <position position="73"/>
    </location>
</feature>
<feature type="active site" description="Proton donor/acceptor" evidence="1">
    <location>
        <position position="184"/>
    </location>
</feature>
<feature type="binding site" evidence="1">
    <location>
        <begin position="10"/>
        <end position="11"/>
    </location>
    <ligand>
        <name>substrate</name>
    </ligand>
</feature>
<feature type="binding site" evidence="1">
    <location>
        <begin position="42"/>
        <end position="43"/>
    </location>
    <ligand>
        <name>substrate</name>
    </ligand>
</feature>
<feature type="binding site" evidence="1">
    <location>
        <begin position="74"/>
        <end position="75"/>
    </location>
    <ligand>
        <name>substrate</name>
    </ligand>
</feature>
<feature type="binding site" evidence="1">
    <location>
        <begin position="185"/>
        <end position="186"/>
    </location>
    <ligand>
        <name>substrate</name>
    </ligand>
</feature>
<sequence>MKKQAIGFIDSGVGGLTVVKEAMRQLPNESIYYVGDTARCPYGPRPEDQVRKFTWEMTHFLLDKNIKMLVIACNTATAAALKDIKKKLAIPVIGVILPGSRAAIKATHTNRIGVIGTEGTVKSNQYKKMIHSKDTKALVTSLACPKFVPLVESNEYSSAIAKKVVAETLRPLKNEGLDTLILGCTHYPLLRPIIQNTLGDSVTLIDSGAETVSEVSTILDYFNLAVDSQNKEKAERNFYTTGSSQMFHAIASEWLQLDDLAVEHITLG</sequence>
<protein>
    <recommendedName>
        <fullName evidence="1">Glutamate racemase</fullName>
        <ecNumber evidence="1">5.1.1.3</ecNumber>
    </recommendedName>
</protein>
<gene>
    <name evidence="1" type="primary">murI</name>
    <name type="synonym">glr</name>
</gene>
<organism>
    <name type="scientific">Carnobacterium sp. (strain St2)</name>
    <dbReference type="NCBI Taxonomy" id="76118"/>
    <lineage>
        <taxon>Bacteria</taxon>
        <taxon>Bacillati</taxon>
        <taxon>Bacillota</taxon>
        <taxon>Bacilli</taxon>
        <taxon>Lactobacillales</taxon>
        <taxon>Carnobacteriaceae</taxon>
        <taxon>Carnobacterium</taxon>
    </lineage>
</organism>
<name>MURI_CARST</name>
<proteinExistence type="inferred from homology"/>